<reference key="1">
    <citation type="submission" date="2006-11" db="EMBL/GenBank/DDBJ databases">
        <title>Sequence of Campylobacter fetus subsp. fetus 82-40.</title>
        <authorList>
            <person name="Fouts D.E."/>
            <person name="Nelson K.E."/>
        </authorList>
    </citation>
    <scope>NUCLEOTIDE SEQUENCE [LARGE SCALE GENOMIC DNA]</scope>
    <source>
        <strain>82-40</strain>
    </source>
</reference>
<name>PURA_CAMFF</name>
<organism>
    <name type="scientific">Campylobacter fetus subsp. fetus (strain 82-40)</name>
    <dbReference type="NCBI Taxonomy" id="360106"/>
    <lineage>
        <taxon>Bacteria</taxon>
        <taxon>Pseudomonadati</taxon>
        <taxon>Campylobacterota</taxon>
        <taxon>Epsilonproteobacteria</taxon>
        <taxon>Campylobacterales</taxon>
        <taxon>Campylobacteraceae</taxon>
        <taxon>Campylobacter</taxon>
    </lineage>
</organism>
<feature type="chain" id="PRO_1000000795" description="Adenylosuccinate synthetase">
    <location>
        <begin position="1"/>
        <end position="416"/>
    </location>
</feature>
<feature type="active site" description="Proton acceptor" evidence="1">
    <location>
        <position position="14"/>
    </location>
</feature>
<feature type="active site" description="Proton donor" evidence="1">
    <location>
        <position position="42"/>
    </location>
</feature>
<feature type="binding site" evidence="1">
    <location>
        <begin position="13"/>
        <end position="19"/>
    </location>
    <ligand>
        <name>GTP</name>
        <dbReference type="ChEBI" id="CHEBI:37565"/>
    </ligand>
</feature>
<feature type="binding site" description="in other chain" evidence="1">
    <location>
        <begin position="14"/>
        <end position="17"/>
    </location>
    <ligand>
        <name>IMP</name>
        <dbReference type="ChEBI" id="CHEBI:58053"/>
        <note>ligand shared between dimeric partners</note>
    </ligand>
</feature>
<feature type="binding site" evidence="1">
    <location>
        <position position="14"/>
    </location>
    <ligand>
        <name>Mg(2+)</name>
        <dbReference type="ChEBI" id="CHEBI:18420"/>
    </ligand>
</feature>
<feature type="binding site" description="in other chain" evidence="1">
    <location>
        <begin position="39"/>
        <end position="42"/>
    </location>
    <ligand>
        <name>IMP</name>
        <dbReference type="ChEBI" id="CHEBI:58053"/>
        <note>ligand shared between dimeric partners</note>
    </ligand>
</feature>
<feature type="binding site" evidence="1">
    <location>
        <begin position="41"/>
        <end position="43"/>
    </location>
    <ligand>
        <name>GTP</name>
        <dbReference type="ChEBI" id="CHEBI:37565"/>
    </ligand>
</feature>
<feature type="binding site" evidence="1">
    <location>
        <position position="41"/>
    </location>
    <ligand>
        <name>Mg(2+)</name>
        <dbReference type="ChEBI" id="CHEBI:18420"/>
    </ligand>
</feature>
<feature type="binding site" description="in other chain" evidence="1">
    <location>
        <position position="126"/>
    </location>
    <ligand>
        <name>IMP</name>
        <dbReference type="ChEBI" id="CHEBI:58053"/>
        <note>ligand shared between dimeric partners</note>
    </ligand>
</feature>
<feature type="binding site" evidence="1">
    <location>
        <position position="140"/>
    </location>
    <ligand>
        <name>IMP</name>
        <dbReference type="ChEBI" id="CHEBI:58053"/>
        <note>ligand shared between dimeric partners</note>
    </ligand>
</feature>
<feature type="binding site" description="in other chain" evidence="1">
    <location>
        <position position="220"/>
    </location>
    <ligand>
        <name>IMP</name>
        <dbReference type="ChEBI" id="CHEBI:58053"/>
        <note>ligand shared between dimeric partners</note>
    </ligand>
</feature>
<feature type="binding site" description="in other chain" evidence="1">
    <location>
        <position position="235"/>
    </location>
    <ligand>
        <name>IMP</name>
        <dbReference type="ChEBI" id="CHEBI:58053"/>
        <note>ligand shared between dimeric partners</note>
    </ligand>
</feature>
<feature type="binding site" evidence="1">
    <location>
        <begin position="295"/>
        <end position="301"/>
    </location>
    <ligand>
        <name>substrate</name>
    </ligand>
</feature>
<feature type="binding site" description="in other chain" evidence="1">
    <location>
        <position position="299"/>
    </location>
    <ligand>
        <name>IMP</name>
        <dbReference type="ChEBI" id="CHEBI:58053"/>
        <note>ligand shared between dimeric partners</note>
    </ligand>
</feature>
<feature type="binding site" evidence="1">
    <location>
        <position position="301"/>
    </location>
    <ligand>
        <name>GTP</name>
        <dbReference type="ChEBI" id="CHEBI:37565"/>
    </ligand>
</feature>
<feature type="binding site" evidence="1">
    <location>
        <begin position="327"/>
        <end position="329"/>
    </location>
    <ligand>
        <name>GTP</name>
        <dbReference type="ChEBI" id="CHEBI:37565"/>
    </ligand>
</feature>
<feature type="binding site" evidence="1">
    <location>
        <begin position="405"/>
        <end position="407"/>
    </location>
    <ligand>
        <name>GTP</name>
        <dbReference type="ChEBI" id="CHEBI:37565"/>
    </ligand>
</feature>
<protein>
    <recommendedName>
        <fullName evidence="1">Adenylosuccinate synthetase</fullName>
        <shortName evidence="1">AMPSase</shortName>
        <shortName evidence="1">AdSS</shortName>
        <ecNumber evidence="1">6.3.4.4</ecNumber>
    </recommendedName>
    <alternativeName>
        <fullName evidence="1">IMP--aspartate ligase</fullName>
    </alternativeName>
</protein>
<gene>
    <name evidence="1" type="primary">purA</name>
    <name type="ordered locus">CFF8240_0370</name>
</gene>
<proteinExistence type="inferred from homology"/>
<evidence type="ECO:0000255" key="1">
    <source>
        <dbReference type="HAMAP-Rule" id="MF_00011"/>
    </source>
</evidence>
<comment type="function">
    <text evidence="1">Plays an important role in the de novo pathway of purine nucleotide biosynthesis. Catalyzes the first committed step in the biosynthesis of AMP from IMP.</text>
</comment>
<comment type="catalytic activity">
    <reaction evidence="1">
        <text>IMP + L-aspartate + GTP = N(6)-(1,2-dicarboxyethyl)-AMP + GDP + phosphate + 2 H(+)</text>
        <dbReference type="Rhea" id="RHEA:15753"/>
        <dbReference type="ChEBI" id="CHEBI:15378"/>
        <dbReference type="ChEBI" id="CHEBI:29991"/>
        <dbReference type="ChEBI" id="CHEBI:37565"/>
        <dbReference type="ChEBI" id="CHEBI:43474"/>
        <dbReference type="ChEBI" id="CHEBI:57567"/>
        <dbReference type="ChEBI" id="CHEBI:58053"/>
        <dbReference type="ChEBI" id="CHEBI:58189"/>
        <dbReference type="EC" id="6.3.4.4"/>
    </reaction>
</comment>
<comment type="cofactor">
    <cofactor evidence="1">
        <name>Mg(2+)</name>
        <dbReference type="ChEBI" id="CHEBI:18420"/>
    </cofactor>
    <text evidence="1">Binds 1 Mg(2+) ion per subunit.</text>
</comment>
<comment type="pathway">
    <text evidence="1">Purine metabolism; AMP biosynthesis via de novo pathway; AMP from IMP: step 1/2.</text>
</comment>
<comment type="subunit">
    <text evidence="1">Homodimer.</text>
</comment>
<comment type="subcellular location">
    <subcellularLocation>
        <location evidence="1">Cytoplasm</location>
    </subcellularLocation>
</comment>
<comment type="similarity">
    <text evidence="1">Belongs to the adenylosuccinate synthetase family.</text>
</comment>
<sequence length="416" mass="45784">MTKADLIVGIQWGDEGKGKIVDMLSQNYDVVCRSGGGHNAGHTIWVDGMRYALHLVPSGILHKNIINIIGNGVVVNPEVLISEMAQFDHLEGRFFISDRAHLNLAHHSLIDQAKERLKGDKAIGTTGKGIGPAYSDKISRSGHRVGELLDPKALCESLMKDFESNKPYFDALSIEIPPKDKILADLVRFKDVLAPFITNTTELLWRAMDDNKKVLLEGAQGTLLDIDHGTYPYVTSSNTVSAGACTGLGLSPKSIGKVIGIIKAYSTRVGNGAFPTEDLGSDGENLCEIGKEFGTTTGRKRRCGWLDVVGIKYSSRLNGVDTYALMKLDVLDGFKNVKICKAYEYKGEVIDYFPSDLQNATPIYEELEGWDSINGIKKYEDLPLNARKYIERIEELTGVKIGFISTSPERNDTIVR</sequence>
<accession>A0RMY9</accession>
<dbReference type="EC" id="6.3.4.4" evidence="1"/>
<dbReference type="EMBL" id="CP000487">
    <property type="protein sequence ID" value="ABK82685.1"/>
    <property type="molecule type" value="Genomic_DNA"/>
</dbReference>
<dbReference type="RefSeq" id="WP_002848536.1">
    <property type="nucleotide sequence ID" value="NC_008599.1"/>
</dbReference>
<dbReference type="SMR" id="A0RMY9"/>
<dbReference type="KEGG" id="cff:CFF8240_0370"/>
<dbReference type="eggNOG" id="COG0104">
    <property type="taxonomic scope" value="Bacteria"/>
</dbReference>
<dbReference type="HOGENOM" id="CLU_029848_0_0_7"/>
<dbReference type="UniPathway" id="UPA00075">
    <property type="reaction ID" value="UER00335"/>
</dbReference>
<dbReference type="Proteomes" id="UP000000760">
    <property type="component" value="Chromosome"/>
</dbReference>
<dbReference type="GO" id="GO:0005737">
    <property type="term" value="C:cytoplasm"/>
    <property type="evidence" value="ECO:0007669"/>
    <property type="project" value="UniProtKB-SubCell"/>
</dbReference>
<dbReference type="GO" id="GO:0004019">
    <property type="term" value="F:adenylosuccinate synthase activity"/>
    <property type="evidence" value="ECO:0007669"/>
    <property type="project" value="UniProtKB-UniRule"/>
</dbReference>
<dbReference type="GO" id="GO:0005525">
    <property type="term" value="F:GTP binding"/>
    <property type="evidence" value="ECO:0007669"/>
    <property type="project" value="UniProtKB-UniRule"/>
</dbReference>
<dbReference type="GO" id="GO:0000287">
    <property type="term" value="F:magnesium ion binding"/>
    <property type="evidence" value="ECO:0007669"/>
    <property type="project" value="UniProtKB-UniRule"/>
</dbReference>
<dbReference type="GO" id="GO:0044208">
    <property type="term" value="P:'de novo' AMP biosynthetic process"/>
    <property type="evidence" value="ECO:0007669"/>
    <property type="project" value="UniProtKB-UniRule"/>
</dbReference>
<dbReference type="GO" id="GO:0046040">
    <property type="term" value="P:IMP metabolic process"/>
    <property type="evidence" value="ECO:0007669"/>
    <property type="project" value="TreeGrafter"/>
</dbReference>
<dbReference type="CDD" id="cd03108">
    <property type="entry name" value="AdSS"/>
    <property type="match status" value="1"/>
</dbReference>
<dbReference type="FunFam" id="1.10.300.10:FF:000001">
    <property type="entry name" value="Adenylosuccinate synthetase"/>
    <property type="match status" value="1"/>
</dbReference>
<dbReference type="FunFam" id="3.90.170.10:FF:000001">
    <property type="entry name" value="Adenylosuccinate synthetase"/>
    <property type="match status" value="1"/>
</dbReference>
<dbReference type="Gene3D" id="3.40.440.10">
    <property type="entry name" value="Adenylosuccinate Synthetase, subunit A, domain 1"/>
    <property type="match status" value="1"/>
</dbReference>
<dbReference type="Gene3D" id="1.10.300.10">
    <property type="entry name" value="Adenylosuccinate Synthetase, subunit A, domain 2"/>
    <property type="match status" value="1"/>
</dbReference>
<dbReference type="Gene3D" id="3.90.170.10">
    <property type="entry name" value="Adenylosuccinate Synthetase, subunit A, domain 3"/>
    <property type="match status" value="1"/>
</dbReference>
<dbReference type="HAMAP" id="MF_00011">
    <property type="entry name" value="Adenylosucc_synth"/>
    <property type="match status" value="1"/>
</dbReference>
<dbReference type="InterPro" id="IPR018220">
    <property type="entry name" value="Adenylosuccin_syn_GTP-bd"/>
</dbReference>
<dbReference type="InterPro" id="IPR033128">
    <property type="entry name" value="Adenylosuccin_syn_Lys_AS"/>
</dbReference>
<dbReference type="InterPro" id="IPR042109">
    <property type="entry name" value="Adenylosuccinate_synth_dom1"/>
</dbReference>
<dbReference type="InterPro" id="IPR042110">
    <property type="entry name" value="Adenylosuccinate_synth_dom2"/>
</dbReference>
<dbReference type="InterPro" id="IPR042111">
    <property type="entry name" value="Adenylosuccinate_synth_dom3"/>
</dbReference>
<dbReference type="InterPro" id="IPR001114">
    <property type="entry name" value="Adenylosuccinate_synthetase"/>
</dbReference>
<dbReference type="InterPro" id="IPR027417">
    <property type="entry name" value="P-loop_NTPase"/>
</dbReference>
<dbReference type="NCBIfam" id="NF002223">
    <property type="entry name" value="PRK01117.1"/>
    <property type="match status" value="1"/>
</dbReference>
<dbReference type="NCBIfam" id="TIGR00184">
    <property type="entry name" value="purA"/>
    <property type="match status" value="1"/>
</dbReference>
<dbReference type="PANTHER" id="PTHR11846">
    <property type="entry name" value="ADENYLOSUCCINATE SYNTHETASE"/>
    <property type="match status" value="1"/>
</dbReference>
<dbReference type="PANTHER" id="PTHR11846:SF0">
    <property type="entry name" value="ADENYLOSUCCINATE SYNTHETASE"/>
    <property type="match status" value="1"/>
</dbReference>
<dbReference type="Pfam" id="PF00709">
    <property type="entry name" value="Adenylsucc_synt"/>
    <property type="match status" value="1"/>
</dbReference>
<dbReference type="SMART" id="SM00788">
    <property type="entry name" value="Adenylsucc_synt"/>
    <property type="match status" value="1"/>
</dbReference>
<dbReference type="SUPFAM" id="SSF52540">
    <property type="entry name" value="P-loop containing nucleoside triphosphate hydrolases"/>
    <property type="match status" value="1"/>
</dbReference>
<dbReference type="PROSITE" id="PS01266">
    <property type="entry name" value="ADENYLOSUCCIN_SYN_1"/>
    <property type="match status" value="1"/>
</dbReference>
<dbReference type="PROSITE" id="PS00513">
    <property type="entry name" value="ADENYLOSUCCIN_SYN_2"/>
    <property type="match status" value="1"/>
</dbReference>
<keyword id="KW-0963">Cytoplasm</keyword>
<keyword id="KW-0342">GTP-binding</keyword>
<keyword id="KW-0436">Ligase</keyword>
<keyword id="KW-0460">Magnesium</keyword>
<keyword id="KW-0479">Metal-binding</keyword>
<keyword id="KW-0547">Nucleotide-binding</keyword>
<keyword id="KW-0658">Purine biosynthesis</keyword>